<protein>
    <recommendedName>
        <fullName evidence="1">ATP synthase subunit delta</fullName>
    </recommendedName>
    <alternativeName>
        <fullName evidence="1">ATP synthase F(1) sector subunit delta</fullName>
    </alternativeName>
    <alternativeName>
        <fullName evidence="1">F-type ATPase subunit delta</fullName>
        <shortName evidence="1">F-ATPase subunit delta</shortName>
    </alternativeName>
</protein>
<name>ATPD_CHLL2</name>
<accession>B3EIJ5</accession>
<gene>
    <name evidence="1" type="primary">atpH</name>
    <name type="ordered locus">Clim_2488</name>
</gene>
<feature type="chain" id="PRO_0000370937" description="ATP synthase subunit delta">
    <location>
        <begin position="1"/>
        <end position="181"/>
    </location>
</feature>
<sequence length="181" mass="20154">MSSLIASRRYAWALLSAAEEGQFLDQATDALNSIKETLANSRDLVHVLRSPLINGDKKTHILEEVFKEIAGEKVMIFLRLLAHKKRAGQLPEIIGEYQKLLDEKNGVINVSINSAVMLSDEQAKDLVNKLANYTGKKVRAKMKLEEALLGGVTVKIEDTIIDGSVRHQLQMMKKFLLAGKL</sequence>
<comment type="function">
    <text evidence="1">F(1)F(0) ATP synthase produces ATP from ADP in the presence of a proton or sodium gradient. F-type ATPases consist of two structural domains, F(1) containing the extramembraneous catalytic core and F(0) containing the membrane proton channel, linked together by a central stalk and a peripheral stalk. During catalysis, ATP synthesis in the catalytic domain of F(1) is coupled via a rotary mechanism of the central stalk subunits to proton translocation.</text>
</comment>
<comment type="function">
    <text evidence="1">This protein is part of the stalk that links CF(0) to CF(1). It either transmits conformational changes from CF(0) to CF(1) or is implicated in proton conduction.</text>
</comment>
<comment type="subunit">
    <text evidence="1">F-type ATPases have 2 components, F(1) - the catalytic core - and F(0) - the membrane proton channel. F(1) has five subunits: alpha(3), beta(3), gamma(1), delta(1), epsilon(1). F(0) has three main subunits: a(1), b(2) and c(10-14). The alpha and beta chains form an alternating ring which encloses part of the gamma chain. F(1) is attached to F(0) by a central stalk formed by the gamma and epsilon chains, while a peripheral stalk is formed by the delta and b chains.</text>
</comment>
<comment type="subcellular location">
    <subcellularLocation>
        <location evidence="1">Cell inner membrane</location>
        <topology evidence="1">Peripheral membrane protein</topology>
    </subcellularLocation>
</comment>
<comment type="similarity">
    <text evidence="1">Belongs to the ATPase delta chain family.</text>
</comment>
<proteinExistence type="inferred from homology"/>
<organism>
    <name type="scientific">Chlorobium limicola (strain DSM 245 / NBRC 103803 / 6330)</name>
    <dbReference type="NCBI Taxonomy" id="290315"/>
    <lineage>
        <taxon>Bacteria</taxon>
        <taxon>Pseudomonadati</taxon>
        <taxon>Chlorobiota</taxon>
        <taxon>Chlorobiia</taxon>
        <taxon>Chlorobiales</taxon>
        <taxon>Chlorobiaceae</taxon>
        <taxon>Chlorobium/Pelodictyon group</taxon>
        <taxon>Chlorobium</taxon>
    </lineage>
</organism>
<keyword id="KW-0066">ATP synthesis</keyword>
<keyword id="KW-0997">Cell inner membrane</keyword>
<keyword id="KW-1003">Cell membrane</keyword>
<keyword id="KW-0139">CF(1)</keyword>
<keyword id="KW-0375">Hydrogen ion transport</keyword>
<keyword id="KW-0406">Ion transport</keyword>
<keyword id="KW-0472">Membrane</keyword>
<keyword id="KW-0813">Transport</keyword>
<evidence type="ECO:0000255" key="1">
    <source>
        <dbReference type="HAMAP-Rule" id="MF_01416"/>
    </source>
</evidence>
<reference key="1">
    <citation type="submission" date="2008-05" db="EMBL/GenBank/DDBJ databases">
        <title>Complete sequence of Chlorobium limicola DSM 245.</title>
        <authorList>
            <consortium name="US DOE Joint Genome Institute"/>
            <person name="Lucas S."/>
            <person name="Copeland A."/>
            <person name="Lapidus A."/>
            <person name="Glavina del Rio T."/>
            <person name="Dalin E."/>
            <person name="Tice H."/>
            <person name="Bruce D."/>
            <person name="Goodwin L."/>
            <person name="Pitluck S."/>
            <person name="Schmutz J."/>
            <person name="Larimer F."/>
            <person name="Land M."/>
            <person name="Hauser L."/>
            <person name="Kyrpides N."/>
            <person name="Ovchinnikova G."/>
            <person name="Zhao F."/>
            <person name="Li T."/>
            <person name="Liu Z."/>
            <person name="Overmann J."/>
            <person name="Bryant D.A."/>
            <person name="Richardson P."/>
        </authorList>
    </citation>
    <scope>NUCLEOTIDE SEQUENCE [LARGE SCALE GENOMIC DNA]</scope>
    <source>
        <strain>DSM 245 / NBRC 103803 / 6330</strain>
    </source>
</reference>
<dbReference type="EMBL" id="CP001097">
    <property type="protein sequence ID" value="ACD91507.1"/>
    <property type="molecule type" value="Genomic_DNA"/>
</dbReference>
<dbReference type="RefSeq" id="WP_012467371.1">
    <property type="nucleotide sequence ID" value="NC_010803.1"/>
</dbReference>
<dbReference type="SMR" id="B3EIJ5"/>
<dbReference type="STRING" id="290315.Clim_2488"/>
<dbReference type="KEGG" id="cli:Clim_2488"/>
<dbReference type="eggNOG" id="COG0712">
    <property type="taxonomic scope" value="Bacteria"/>
</dbReference>
<dbReference type="HOGENOM" id="CLU_085114_4_0_10"/>
<dbReference type="OrthoDB" id="9802471at2"/>
<dbReference type="Proteomes" id="UP000008841">
    <property type="component" value="Chromosome"/>
</dbReference>
<dbReference type="GO" id="GO:0005886">
    <property type="term" value="C:plasma membrane"/>
    <property type="evidence" value="ECO:0007669"/>
    <property type="project" value="UniProtKB-SubCell"/>
</dbReference>
<dbReference type="GO" id="GO:0045259">
    <property type="term" value="C:proton-transporting ATP synthase complex"/>
    <property type="evidence" value="ECO:0007669"/>
    <property type="project" value="UniProtKB-KW"/>
</dbReference>
<dbReference type="GO" id="GO:0046933">
    <property type="term" value="F:proton-transporting ATP synthase activity, rotational mechanism"/>
    <property type="evidence" value="ECO:0007669"/>
    <property type="project" value="UniProtKB-UniRule"/>
</dbReference>
<dbReference type="Gene3D" id="1.10.520.20">
    <property type="entry name" value="N-terminal domain of the delta subunit of the F1F0-ATP synthase"/>
    <property type="match status" value="1"/>
</dbReference>
<dbReference type="HAMAP" id="MF_01416">
    <property type="entry name" value="ATP_synth_delta_bact"/>
    <property type="match status" value="1"/>
</dbReference>
<dbReference type="InterPro" id="IPR026015">
    <property type="entry name" value="ATP_synth_OSCP/delta_N_sf"/>
</dbReference>
<dbReference type="InterPro" id="IPR000711">
    <property type="entry name" value="ATPase_OSCP/dsu"/>
</dbReference>
<dbReference type="NCBIfam" id="TIGR01145">
    <property type="entry name" value="ATP_synt_delta"/>
    <property type="match status" value="1"/>
</dbReference>
<dbReference type="PANTHER" id="PTHR11910">
    <property type="entry name" value="ATP SYNTHASE DELTA CHAIN"/>
    <property type="match status" value="1"/>
</dbReference>
<dbReference type="Pfam" id="PF00213">
    <property type="entry name" value="OSCP"/>
    <property type="match status" value="1"/>
</dbReference>
<dbReference type="PRINTS" id="PR00125">
    <property type="entry name" value="ATPASEDELTA"/>
</dbReference>
<dbReference type="SUPFAM" id="SSF47928">
    <property type="entry name" value="N-terminal domain of the delta subunit of the F1F0-ATP synthase"/>
    <property type="match status" value="1"/>
</dbReference>